<dbReference type="EC" id="6.3.2.-" evidence="7"/>
<dbReference type="EMBL" id="EQ963479">
    <property type="protein sequence ID" value="EED49603.1"/>
    <property type="status" value="ALT_SEQ"/>
    <property type="molecule type" value="Genomic_DNA"/>
</dbReference>
<dbReference type="RefSeq" id="XP_002379984.1">
    <property type="nucleotide sequence ID" value="XM_002379943.1"/>
</dbReference>
<dbReference type="SMR" id="B8NI19"/>
<dbReference type="STRING" id="332952.B8NI19"/>
<dbReference type="ESTHER" id="aspfn-imqb">
    <property type="family name" value="Thioesterase"/>
</dbReference>
<dbReference type="EnsemblFungi" id="EED49603">
    <property type="protein sequence ID" value="EED49603"/>
    <property type="gene ID" value="AFLA_064240"/>
</dbReference>
<dbReference type="VEuPathDB" id="FungiDB:AFLA_008358"/>
<dbReference type="eggNOG" id="KOG1176">
    <property type="taxonomic scope" value="Eukaryota"/>
</dbReference>
<dbReference type="eggNOG" id="KOG1178">
    <property type="taxonomic scope" value="Eukaryota"/>
</dbReference>
<dbReference type="HOGENOM" id="CLU_000022_0_12_1"/>
<dbReference type="GO" id="GO:0005737">
    <property type="term" value="C:cytoplasm"/>
    <property type="evidence" value="ECO:0007669"/>
    <property type="project" value="TreeGrafter"/>
</dbReference>
<dbReference type="GO" id="GO:0016874">
    <property type="term" value="F:ligase activity"/>
    <property type="evidence" value="ECO:0007669"/>
    <property type="project" value="UniProtKB-KW"/>
</dbReference>
<dbReference type="GO" id="GO:0031177">
    <property type="term" value="F:phosphopantetheine binding"/>
    <property type="evidence" value="ECO:0007669"/>
    <property type="project" value="InterPro"/>
</dbReference>
<dbReference type="GO" id="GO:0043041">
    <property type="term" value="P:amino acid activation for nonribosomal peptide biosynthetic process"/>
    <property type="evidence" value="ECO:0007669"/>
    <property type="project" value="TreeGrafter"/>
</dbReference>
<dbReference type="GO" id="GO:0044550">
    <property type="term" value="P:secondary metabolite biosynthetic process"/>
    <property type="evidence" value="ECO:0007669"/>
    <property type="project" value="TreeGrafter"/>
</dbReference>
<dbReference type="CDD" id="cd05918">
    <property type="entry name" value="A_NRPS_SidN3_like"/>
    <property type="match status" value="3"/>
</dbReference>
<dbReference type="CDD" id="cd19545">
    <property type="entry name" value="FUM14_C_NRPS-like"/>
    <property type="match status" value="2"/>
</dbReference>
<dbReference type="FunFam" id="3.30.300.30:FF:000015">
    <property type="entry name" value="Nonribosomal peptide synthase SidD"/>
    <property type="match status" value="3"/>
</dbReference>
<dbReference type="FunFam" id="3.30.559.30:FF:000003">
    <property type="entry name" value="Nonribosomal peptide synthase SidD"/>
    <property type="match status" value="2"/>
</dbReference>
<dbReference type="FunFam" id="1.10.1200.10:FF:000005">
    <property type="entry name" value="Nonribosomal peptide synthetase 1"/>
    <property type="match status" value="2"/>
</dbReference>
<dbReference type="FunFam" id="3.40.50.12780:FF:000014">
    <property type="entry name" value="Nonribosomal peptide synthetase 1"/>
    <property type="match status" value="3"/>
</dbReference>
<dbReference type="Gene3D" id="3.30.300.30">
    <property type="match status" value="3"/>
</dbReference>
<dbReference type="Gene3D" id="1.10.1200.10">
    <property type="entry name" value="ACP-like"/>
    <property type="match status" value="3"/>
</dbReference>
<dbReference type="Gene3D" id="3.40.50.1820">
    <property type="entry name" value="alpha/beta hydrolase"/>
    <property type="match status" value="1"/>
</dbReference>
<dbReference type="Gene3D" id="3.30.559.10">
    <property type="entry name" value="Chloramphenicol acetyltransferase-like domain"/>
    <property type="match status" value="2"/>
</dbReference>
<dbReference type="Gene3D" id="3.40.50.12780">
    <property type="entry name" value="N-terminal domain of ligase-like"/>
    <property type="match status" value="3"/>
</dbReference>
<dbReference type="Gene3D" id="3.30.559.30">
    <property type="entry name" value="Nonribosomal peptide synthetase, condensation domain"/>
    <property type="match status" value="2"/>
</dbReference>
<dbReference type="InterPro" id="IPR010071">
    <property type="entry name" value="AA_adenyl_dom"/>
</dbReference>
<dbReference type="InterPro" id="IPR029058">
    <property type="entry name" value="AB_hydrolase_fold"/>
</dbReference>
<dbReference type="InterPro" id="IPR036736">
    <property type="entry name" value="ACP-like_sf"/>
</dbReference>
<dbReference type="InterPro" id="IPR045851">
    <property type="entry name" value="AMP-bd_C_sf"/>
</dbReference>
<dbReference type="InterPro" id="IPR020845">
    <property type="entry name" value="AMP-binding_CS"/>
</dbReference>
<dbReference type="InterPro" id="IPR000873">
    <property type="entry name" value="AMP-dep_synth/lig_dom"/>
</dbReference>
<dbReference type="InterPro" id="IPR042099">
    <property type="entry name" value="ANL_N_sf"/>
</dbReference>
<dbReference type="InterPro" id="IPR023213">
    <property type="entry name" value="CAT-like_dom_sf"/>
</dbReference>
<dbReference type="InterPro" id="IPR001242">
    <property type="entry name" value="Condensatn"/>
</dbReference>
<dbReference type="InterPro" id="IPR020806">
    <property type="entry name" value="PKS_PP-bd"/>
</dbReference>
<dbReference type="InterPro" id="IPR009081">
    <property type="entry name" value="PP-bd_ACP"/>
</dbReference>
<dbReference type="InterPro" id="IPR006162">
    <property type="entry name" value="Ppantetheine_attach_site"/>
</dbReference>
<dbReference type="InterPro" id="IPR001031">
    <property type="entry name" value="Thioesterase"/>
</dbReference>
<dbReference type="NCBIfam" id="TIGR01733">
    <property type="entry name" value="AA-adenyl-dom"/>
    <property type="match status" value="3"/>
</dbReference>
<dbReference type="NCBIfam" id="NF003417">
    <property type="entry name" value="PRK04813.1"/>
    <property type="match status" value="3"/>
</dbReference>
<dbReference type="PANTHER" id="PTHR45527">
    <property type="entry name" value="NONRIBOSOMAL PEPTIDE SYNTHETASE"/>
    <property type="match status" value="1"/>
</dbReference>
<dbReference type="PANTHER" id="PTHR45527:SF3">
    <property type="entry name" value="SIDEROPHORE SYNTHETASE (EUROFUNG)"/>
    <property type="match status" value="1"/>
</dbReference>
<dbReference type="Pfam" id="PF00501">
    <property type="entry name" value="AMP-binding"/>
    <property type="match status" value="3"/>
</dbReference>
<dbReference type="Pfam" id="PF00668">
    <property type="entry name" value="Condensation"/>
    <property type="match status" value="2"/>
</dbReference>
<dbReference type="Pfam" id="PF00550">
    <property type="entry name" value="PP-binding"/>
    <property type="match status" value="3"/>
</dbReference>
<dbReference type="Pfam" id="PF00975">
    <property type="entry name" value="Thioesterase"/>
    <property type="match status" value="1"/>
</dbReference>
<dbReference type="SMART" id="SM00823">
    <property type="entry name" value="PKS_PP"/>
    <property type="match status" value="3"/>
</dbReference>
<dbReference type="SUPFAM" id="SSF56801">
    <property type="entry name" value="Acetyl-CoA synthetase-like"/>
    <property type="match status" value="3"/>
</dbReference>
<dbReference type="SUPFAM" id="SSF47336">
    <property type="entry name" value="ACP-like"/>
    <property type="match status" value="3"/>
</dbReference>
<dbReference type="SUPFAM" id="SSF53474">
    <property type="entry name" value="alpha/beta-Hydrolases"/>
    <property type="match status" value="1"/>
</dbReference>
<dbReference type="SUPFAM" id="SSF52777">
    <property type="entry name" value="CoA-dependent acyltransferases"/>
    <property type="match status" value="4"/>
</dbReference>
<dbReference type="PROSITE" id="PS00455">
    <property type="entry name" value="AMP_BINDING"/>
    <property type="match status" value="3"/>
</dbReference>
<dbReference type="PROSITE" id="PS50075">
    <property type="entry name" value="CARRIER"/>
    <property type="match status" value="3"/>
</dbReference>
<dbReference type="PROSITE" id="PS00012">
    <property type="entry name" value="PHOSPHOPANTETHEINE"/>
    <property type="match status" value="3"/>
</dbReference>
<reference key="1">
    <citation type="journal article" date="2015" name="Genome Announc.">
        <title>Genome sequence of Aspergillus flavus NRRL 3357, a strain that causes aflatoxin contamination of food and feed.</title>
        <authorList>
            <person name="Nierman W.C."/>
            <person name="Yu J."/>
            <person name="Fedorova-Abrams N.D."/>
            <person name="Losada L."/>
            <person name="Cleveland T.E."/>
            <person name="Bhatnagar D."/>
            <person name="Bennett J.W."/>
            <person name="Dean R."/>
            <person name="Payne G.A."/>
        </authorList>
    </citation>
    <scope>NUCLEOTIDE SEQUENCE [LARGE SCALE GENOMIC DNA]</scope>
    <source>
        <strain>ATCC 200026 / FGSC A1120 / IAM 13836 / NRRL 3357 / JCM 12722 / SRRC 167</strain>
    </source>
</reference>
<reference key="2">
    <citation type="journal article" date="2018" name="ACS Chem. Biol.">
        <title>NRPS-derived isoquinolines and lipopetides mediate antagonism between plant pathogenic fungi and bacteria.</title>
        <authorList>
            <person name="Khalid S."/>
            <person name="Baccile J.A."/>
            <person name="Spraker J.E."/>
            <person name="Tannous J."/>
            <person name="Imran M."/>
            <person name="Schroeder F.C."/>
            <person name="Keller N.P."/>
        </authorList>
    </citation>
    <scope>INDUCTION</scope>
    <scope>FUNCTION</scope>
    <scope>DOMAIN</scope>
    <scope>PATHWAY</scope>
</reference>
<keyword id="KW-0436">Ligase</keyword>
<keyword id="KW-0596">Phosphopantetheine</keyword>
<keyword id="KW-0597">Phosphoprotein</keyword>
<keyword id="KW-0677">Repeat</keyword>
<protein>
    <recommendedName>
        <fullName evidence="5">Nonribosomal peptide synthetase imqB</fullName>
        <shortName evidence="5">NRPS imqB</shortName>
        <ecNumber evidence="7">6.3.2.-</ecNumber>
    </recommendedName>
    <alternativeName>
        <fullName evidence="5">Imizoquin biosynthesis cluster protein B</fullName>
    </alternativeName>
</protein>
<name>IMQB_ASPFN</name>
<comment type="function">
    <text evidence="4">Nonribosomal peptide synthetase; part of the gene cluster that mediates the biosynthesis of imizoquins A to D, tripeptide-derived alkaloids that serve a protective role against oxidative stress that are essential for normal germination (PubMed:29182847). ImqB is a canonical three-module NRPS that assembles the tripeptide backbone of the imizoquins via condensation of Trp, Tyr, and Leu-derived precursors (PubMed:29182847). N-methylation by imqF and phenol oxidation by imqC, followed by cyclization via the FAD-dependent oxidase imqH carry out the three-step transformation of L-tyrosine into tetrahydroisoquinoline (PubMed:29182847). Importantly, this sequence requires the presence of a free amine in the tyrosine moiety, indicating that isoquinoline formation occurs prior to peptide bond formation (PubMed:29182847). The imidazolidin-4-one ring of imizoquins could form following additional oxidation of the methyl-derived bridgehead carbon by imqH (PubMed:29182847). Lastly, O-methylation by imqG and leucine hydroxylation by imqE complete biosynthesis of the imizoquins (PubMed:29182847).</text>
</comment>
<comment type="pathway">
    <text evidence="7">Secondary metabolite biosynthesis.</text>
</comment>
<comment type="induction">
    <text evidence="4">Expression is down-regulated by ralstonins, lipopeptides produced by the plant pathogenic bacteria Ralstonia solanacearum (PubMed:29182847). Expression is positively regulated by the imizoquins cluster-specific transcription regulator imqK (PubMed:29182847).</text>
</comment>
<comment type="domain">
    <text evidence="1 7">NRP synthetases are composed of discrete domains (adenylation (A), thiolation (T) or peptidyl carrier protein (PCP) and condensation (C) domains) which when grouped together are referred to as a single module (By similarity). Each module is responsible for the recognition (via the A domain) and incorporation of a single amino acid into the growing peptide product (By similarity). Thus, an NRP synthetase is generally composed of one or more modules and can terminate in a thioesterase domain (TE) that releases the newly synthesized peptide from the enzyme (By similarity). Occasionally, epimerase (E) domains (responsible for L- to D-amino acid conversion) are present within the NRP synthetase (By similarity). ImqB has the following architecture: A-T-C-A-T-C-A-T-TE (PubMed:29182847).</text>
</comment>
<comment type="similarity">
    <text evidence="6">Belongs to the NRP synthetase family.</text>
</comment>
<comment type="sequence caution" evidence="6">
    <conflict type="erroneous gene model prediction">
        <sequence resource="EMBL-CDS" id="EED49603"/>
    </conflict>
</comment>
<evidence type="ECO:0000250" key="1">
    <source>
        <dbReference type="UniProtKB" id="Q4WAZ9"/>
    </source>
</evidence>
<evidence type="ECO:0000255" key="2"/>
<evidence type="ECO:0000255" key="3">
    <source>
        <dbReference type="PROSITE-ProRule" id="PRU00258"/>
    </source>
</evidence>
<evidence type="ECO:0000269" key="4">
    <source>
    </source>
</evidence>
<evidence type="ECO:0000303" key="5">
    <source>
    </source>
</evidence>
<evidence type="ECO:0000305" key="6"/>
<evidence type="ECO:0000305" key="7">
    <source>
    </source>
</evidence>
<proteinExistence type="evidence at transcript level"/>
<organism>
    <name type="scientific">Aspergillus flavus (strain ATCC 200026 / FGSC A1120 / IAM 13836 / NRRL 3357 / JCM 12722 / SRRC 167)</name>
    <dbReference type="NCBI Taxonomy" id="332952"/>
    <lineage>
        <taxon>Eukaryota</taxon>
        <taxon>Fungi</taxon>
        <taxon>Dikarya</taxon>
        <taxon>Ascomycota</taxon>
        <taxon>Pezizomycotina</taxon>
        <taxon>Eurotiomycetes</taxon>
        <taxon>Eurotiomycetidae</taxon>
        <taxon>Eurotiales</taxon>
        <taxon>Aspergillaceae</taxon>
        <taxon>Aspergillus</taxon>
        <taxon>Aspergillus subgen. Circumdati</taxon>
    </lineage>
</organism>
<gene>
    <name evidence="5" type="primary">imqB</name>
    <name type="ORF">AFLA_064240</name>
</gene>
<sequence length="3332" mass="367538">MLSPAVCYHTDEGKNGYTFPNLETPKNGVVQTPVQYLIQTAPLHDFCSHQMVDLRTLLQCAWSRVIAQLDSTTDLKADAIYGTKSKSLLEGFISEVKKSQQSTQLENERILTEKLLLPLNPRGTSSLSWLQNDLLCATGGEYGEQSTGGFELAQCGSWIAISASFNPLIVSSRWVNDYIEVFRSFLVALVVGDDELSAPENYLTPEDCARIRNWNSAVPPEINASILDVFSEQVKAHPGSTAVSGWDASLTYQELEDCADQLAYQLQSRGVGPGMLIPLCFEKSAWTVVAIIAVISTGAAFVLLDASQPEARLRSIVMQTRATLMITSSQKKDLGRRLVPEVVSVQPTKSTKNSERSRALRPVIKPDSLLYVVFTSGSTGQPKGAMISHSNFVSAVHYRRSELYNVTPRVLDFASYSFDISIESTLAPLLLGGCVCVPSDASREADPSDAIKAFNVNQVMLTPSVARLVEPENVPSLRLLHLGGEQISRFDIERWPSTVKLINGYGPAECTVVSTANTVSPSSPEAHTIGRGLGAVTWVVDPADTGRLVPVGAVGELVIEGPLVGSGYLHDEGRTLAAFIVDPPWLRAFGRRGRLYRTGDLVSYNSNGTLTFIGRKDTQVKVNGQRVELGEIEHNLQQEIYNQGNCVVDVVVDLISVNSNSGKQSILLAFLGLERAAQERFAASGTPSVQELTSAMWEILEPINLFKVLPRYMVPSIYIPLWRMPLLPSGKINRLKLRSMGESLSVDDLAAFRKPQVATVDTQGRITPQEKLLQSLWGQIFPHCAGSIQPDDNFFSLGGDSLTAMKLVGLIRKHGIENKHSETIRIADILQWPRLADMARCITRVDDKQGDVQDALFDLLPDHIAPSNARQIAAPQCDVQPEQIVDIYPCTPLQEGLMALSAERSGAYIAQNIFELSDRTNIDTLRMAWTHIVMSSVIFRTRIVQLDSQTLAQAVVTVPIEWECYDGKLNDFVAIDRHRPMGIGKALMRLTVVTERSEESLLKCFLVWTAHHAVFDDWILNLITSLVGKMYHGRPPSSFHLTPYKRFIRHLQELNRESFSNYWRQELEGTNAAIFPHLPSAVDKPVADATANFAFSLNDSKLNVHASLPTILRAAWSILVSRHTQTDDVIFGETLTGRNAPVAGVEEMDGPTLTTIPRRVKVQNEMRVAEFLEEIRRHEINSIPYEGFGLQNIQKLSDDARTACQFATLLVIQRDPEVSFDSPMINVTEKVLHEDCGEDGKPYASFFTTYPLMVTISIKDNQINIYASFDSRIIERSQMQVLMHQLEVITRQVIQEPHEVVGGINCLTRKELHQIWSWNRLPWVPVSGSVHDSIAEVSNTRPTAPAVCAWDGSLTYGELDNLSTRLGSYLFKVGVEAESLVPLCFEKSVWTIVSMLAVIKAGGAFVLLDPTQPKQRLGEIIVRAKANYVLTSPLQYGMVSDLASEFNLTIVLVSKSPLDALTDDATVTDRMPQHLDSDRPLFVTFTSGSTGKPKGVISTHGSYLSGVNYRRSILQLPNLDMRVFDFASYSFDVSTDVILSTLLTGGCVCVPSDFDRKNNIPGAINALRVNAADLTPSVSRLLSPESVPGLKVLKLGGEANTAADHALWLGKTTLVNIYGPSECLVVTAKTVLPGIDPCNIGRGLGANTWVADPTNHDRLAPIGSIGELLVEGPILGRGYLDDQKQTDAVFIHNPTWLVKGLPGFQPGREGRVYKTGDLVRYNPDGTLHYIGRKDRQLKVRGQRVEPAEIEGAIKRHMQSKLGMTIDVVADLVTSNRDQRKRLIAFLGLNQVLESRGYSEKDHLGDTVLRDIMWEVTAGLEVLLSQTLPPYMVPSVYVPLRHIPLLPSGKTDRRKLQSAAASLSPEDLSFFRERPKAQNRAIATPKEEKLQKIWADALGVKSIQAEDNFFTIGGDSIAAMRLVGLARDQGLLLSVADIFQRPRLYEMAEKAAETGTELLDIPAFSLLPGANPYVIDEREVAAAQCGCSIELIEDIYPCTPLQEGLMALSTKTPGAYISQNVFQMGNATNTDLMKEAWDYVVRSNPIMRTRVILSARQDLVQVTVQEGIHWASHDSLDCYLKYDRNTSMGLGMPLTRLAWVDDEMTKRSFLVWTAHHAIFDGWVLSLVMENVIRVYHGKSLHVGPPFKAFIKYLKELERAQMDTFWQDEFSGITATPFPALPSSTYQPKADVETKLEMSFTWSTTSNVTSSTFLRLAWAVLVARLTASSDVIFGETLNGRNAPIPGIERMIGPTLTTLPRRIVLEDGLPVADLLHRLKDHEIAMMPFEHVGLQHLQELSADCQAACKFQTLFVVQRGMDHDMSEMSLTISGDVSNFNSYALMLTCAPESDKILFHASHDSNVISPEKMQDVLNQLQNVVMQLSKKMDRPLREINCLSEIDTQQIWKWNHQLPESISIPVHEIIAQQAREHPATEAVCAWDGTFTYRELDTLAGQLAYHLKELGAVSTPGYHIPLCFEKSAWTVISILAVMKAGGSFVLLDVSQPQDRLQHIVSHIKANYILSSPRQSDLASSLAANVVVVSSDFVRSLRQLHTPGPLNPNSALYVVFTSGSTGKPKGVIITHLNFASGVHYRQNVMHMPGFRLLDFPSYSFDASVESNLVPLMIGGCVCIASDELCQNNLSAAISSTNANAVMLTPSSATLISPENAHSLKQLHLGGEKLTAANIETWADKLKLVVGYGPAECAVTTTGRIVKGMVPQKENIGPAFGAVTWLVDPASHDRLVPLGTIGELLIEGPIVGQGYVNDPERTAAAFIENPPWLLAGGGMFAGRQGRLYKTGDLARYDSDGTLIFIGRKDTQVKIRGQRVELQEIEHHVYQYLRDLTGLGLSIVADLISTCSDIANPTLVVFIELEAVMTQKGYLPDPGPAVLYNEMKSMVPGLDEALRNALPRYMIPSAYVPRWKLPMMPSGKLNRKQLRSDAESLTAEQWNHFRSLISAVSPAARGREVATNDEAAVQRLWADILRIAEKQIKADDSFFTLGGNSITAMKLVELARRRGILFNVADVFAHPVLSDLASRIGRVETTPLNQDDLAYAPLQRLMSSNPTLIQGQSSNIPLVMIHDGGGTTYAYHRMGPVNRPLYGIHFPGYASGTAWKGGIKSLGRHYADLIQKSLLSGPIILGGWSSGGLISLEVALCLKSGPFEVKGVIMVDSVFPAPSLVDETFLAPSSSETNDTAMAADGTLAKMNMFQFNSMLKEYSPPRFEDLFQDLDASKAGLCHEQRSNVNPITEDTHHAERFPVHLLRASSTKASIGELDENMKSFLDATLGWEHYRPRLVSEVDLIDAEHYSLFSANTVAETTRHIRDFCDRITKSRKV</sequence>
<feature type="chain" id="PRO_0000444550" description="Nonribosomal peptide synthetase imqB">
    <location>
        <begin position="1"/>
        <end position="3332"/>
    </location>
</feature>
<feature type="domain" description="Carrier 1" evidence="3 7">
    <location>
        <begin position="764"/>
        <end position="846"/>
    </location>
</feature>
<feature type="domain" description="Carrier 2" evidence="3 7">
    <location>
        <begin position="1880"/>
        <end position="1954"/>
    </location>
</feature>
<feature type="domain" description="Carrier 3" evidence="3 7">
    <location>
        <begin position="2963"/>
        <end position="3039"/>
    </location>
</feature>
<feature type="region of interest" description="Adenylation 1" evidence="7">
    <location>
        <begin position="230"/>
        <end position="622"/>
    </location>
</feature>
<feature type="region of interest" description="Condensation 1" evidence="2 7">
    <location>
        <begin position="886"/>
        <end position="1314"/>
    </location>
</feature>
<feature type="region of interest" description="Adenylation 2" evidence="2 7">
    <location>
        <begin position="1336"/>
        <end position="1740"/>
    </location>
</feature>
<feature type="region of interest" description="Condensation 2" evidence="2 7">
    <location>
        <begin position="1992"/>
        <end position="2402"/>
    </location>
</feature>
<feature type="region of interest" description="Adenylation 3" evidence="2 7">
    <location>
        <begin position="2422"/>
        <end position="2819"/>
    </location>
</feature>
<feature type="region of interest" description="Thioesterase (TE) domain" evidence="2 7">
    <location>
        <begin position="3058"/>
        <end position="3323"/>
    </location>
</feature>
<feature type="modified residue" description="O-(pantetheine 4'-phosphoryl)serine" evidence="3">
    <location>
        <position position="801"/>
    </location>
</feature>
<feature type="modified residue" description="O-(pantetheine 4'-phosphoryl)serine" evidence="3">
    <location>
        <position position="1915"/>
    </location>
</feature>
<feature type="modified residue" description="O-(pantetheine 4'-phosphoryl)serine" evidence="3">
    <location>
        <position position="3000"/>
    </location>
</feature>
<accession>B8NI19</accession>